<organism>
    <name type="scientific">Sebastes schlegelii</name>
    <name type="common">Korean rockfish</name>
    <dbReference type="NCBI Taxonomy" id="214486"/>
    <lineage>
        <taxon>Eukaryota</taxon>
        <taxon>Metazoa</taxon>
        <taxon>Chordata</taxon>
        <taxon>Craniata</taxon>
        <taxon>Vertebrata</taxon>
        <taxon>Euteleostomi</taxon>
        <taxon>Actinopterygii</taxon>
        <taxon>Neopterygii</taxon>
        <taxon>Teleostei</taxon>
        <taxon>Neoteleostei</taxon>
        <taxon>Acanthomorphata</taxon>
        <taxon>Eupercaria</taxon>
        <taxon>Perciformes</taxon>
        <taxon>Scorpaenoidei</taxon>
        <taxon>Sebastidae</taxon>
        <taxon>Sebastinae</taxon>
        <taxon>Sebastes</taxon>
    </lineage>
</organism>
<name>SOMA_SEBSC</name>
<evidence type="ECO:0000250" key="1"/>
<evidence type="ECO:0000305" key="2"/>
<accession>P87391</accession>
<keyword id="KW-1015">Disulfide bond</keyword>
<keyword id="KW-0372">Hormone</keyword>
<keyword id="KW-0479">Metal-binding</keyword>
<keyword id="KW-0873">Pyrrolidone carboxylic acid</keyword>
<keyword id="KW-0964">Secreted</keyword>
<keyword id="KW-0732">Signal</keyword>
<keyword id="KW-0862">Zinc</keyword>
<proteinExistence type="evidence at transcript level"/>
<dbReference type="EMBL" id="U89917">
    <property type="protein sequence ID" value="AAB49492.1"/>
    <property type="molecule type" value="mRNA"/>
</dbReference>
<dbReference type="SMR" id="P87391"/>
<dbReference type="GO" id="GO:0005615">
    <property type="term" value="C:extracellular space"/>
    <property type="evidence" value="ECO:0007669"/>
    <property type="project" value="InterPro"/>
</dbReference>
<dbReference type="GO" id="GO:0070186">
    <property type="term" value="F:growth hormone activity"/>
    <property type="evidence" value="ECO:0007669"/>
    <property type="project" value="TreeGrafter"/>
</dbReference>
<dbReference type="GO" id="GO:0005131">
    <property type="term" value="F:growth hormone receptor binding"/>
    <property type="evidence" value="ECO:0007669"/>
    <property type="project" value="InterPro"/>
</dbReference>
<dbReference type="GO" id="GO:0046872">
    <property type="term" value="F:metal ion binding"/>
    <property type="evidence" value="ECO:0007669"/>
    <property type="project" value="UniProtKB-KW"/>
</dbReference>
<dbReference type="GO" id="GO:0048513">
    <property type="term" value="P:animal organ development"/>
    <property type="evidence" value="ECO:0007669"/>
    <property type="project" value="TreeGrafter"/>
</dbReference>
<dbReference type="GO" id="GO:0060396">
    <property type="term" value="P:growth hormone receptor signaling pathway"/>
    <property type="evidence" value="ECO:0007669"/>
    <property type="project" value="TreeGrafter"/>
</dbReference>
<dbReference type="GO" id="GO:0045927">
    <property type="term" value="P:positive regulation of growth"/>
    <property type="evidence" value="ECO:0007669"/>
    <property type="project" value="TreeGrafter"/>
</dbReference>
<dbReference type="GO" id="GO:0046427">
    <property type="term" value="P:positive regulation of receptor signaling pathway via JAK-STAT"/>
    <property type="evidence" value="ECO:0007669"/>
    <property type="project" value="TreeGrafter"/>
</dbReference>
<dbReference type="GO" id="GO:0031667">
    <property type="term" value="P:response to nutrient levels"/>
    <property type="evidence" value="ECO:0007669"/>
    <property type="project" value="TreeGrafter"/>
</dbReference>
<dbReference type="CDD" id="cd10285">
    <property type="entry name" value="somatotropin_like"/>
    <property type="match status" value="1"/>
</dbReference>
<dbReference type="FunFam" id="1.20.1250.10:FF:000009">
    <property type="entry name" value="Growth hormone"/>
    <property type="match status" value="1"/>
</dbReference>
<dbReference type="Gene3D" id="1.20.1250.10">
    <property type="match status" value="1"/>
</dbReference>
<dbReference type="InterPro" id="IPR009079">
    <property type="entry name" value="4_helix_cytokine-like_core"/>
</dbReference>
<dbReference type="InterPro" id="IPR034975">
    <property type="entry name" value="Somatotropin"/>
</dbReference>
<dbReference type="InterPro" id="IPR001400">
    <property type="entry name" value="Somatotropin/Prolactin"/>
</dbReference>
<dbReference type="InterPro" id="IPR018116">
    <property type="entry name" value="Somatotropin_CS"/>
</dbReference>
<dbReference type="PANTHER" id="PTHR11417:SF2">
    <property type="entry name" value="SOMATOTROPIN"/>
    <property type="match status" value="1"/>
</dbReference>
<dbReference type="PANTHER" id="PTHR11417">
    <property type="entry name" value="SOMATOTROPIN,PROLACTIN"/>
    <property type="match status" value="1"/>
</dbReference>
<dbReference type="Pfam" id="PF00103">
    <property type="entry name" value="Hormone_1"/>
    <property type="match status" value="1"/>
</dbReference>
<dbReference type="PRINTS" id="PR00836">
    <property type="entry name" value="SOMATOTROPIN"/>
</dbReference>
<dbReference type="SUPFAM" id="SSF47266">
    <property type="entry name" value="4-helical cytokines"/>
    <property type="match status" value="1"/>
</dbReference>
<dbReference type="PROSITE" id="PS00266">
    <property type="entry name" value="SOMATOTROPIN_1"/>
    <property type="match status" value="1"/>
</dbReference>
<dbReference type="PROSITE" id="PS00338">
    <property type="entry name" value="SOMATOTROPIN_2"/>
    <property type="match status" value="1"/>
</dbReference>
<gene>
    <name type="primary">gh</name>
</gene>
<protein>
    <recommendedName>
        <fullName>Somatotropin</fullName>
    </recommendedName>
    <alternativeName>
        <fullName>Growth hormone</fullName>
    </alternativeName>
</protein>
<reference key="1">
    <citation type="submission" date="1997-02" db="EMBL/GenBank/DDBJ databases">
        <authorList>
            <person name="Lee J.H."/>
            <person name="Kim C.H."/>
            <person name="Cho J.M."/>
            <person name="Han G.B."/>
        </authorList>
    </citation>
    <scope>NUCLEOTIDE SEQUENCE [MRNA]</scope>
</reference>
<comment type="function">
    <text>Growth hormone plays an important role in growth control and is involved in the regulation of several anabolic processes. Implicated as an osmoregulatory substance important for seawater adaptation.</text>
</comment>
<comment type="subcellular location">
    <subcellularLocation>
        <location>Secreted</location>
    </subcellularLocation>
</comment>
<comment type="similarity">
    <text evidence="2">Belongs to the somatotropin/prolactin family.</text>
</comment>
<feature type="signal peptide" evidence="1">
    <location>
        <begin position="1"/>
        <end position="17"/>
    </location>
</feature>
<feature type="chain" id="PRO_0000033053" description="Somatotropin">
    <location>
        <begin position="18"/>
        <end position="204"/>
    </location>
</feature>
<feature type="binding site" evidence="1">
    <location>
        <position position="36"/>
    </location>
    <ligand>
        <name>Zn(2+)</name>
        <dbReference type="ChEBI" id="CHEBI:29105"/>
    </ligand>
</feature>
<feature type="binding site" evidence="1">
    <location>
        <position position="186"/>
    </location>
    <ligand>
        <name>Zn(2+)</name>
        <dbReference type="ChEBI" id="CHEBI:29105"/>
    </ligand>
</feature>
<feature type="modified residue" description="Pyrrolidone carboxylic acid" evidence="1">
    <location>
        <position position="18"/>
    </location>
</feature>
<feature type="disulfide bond" evidence="1">
    <location>
        <begin position="69"/>
        <end position="177"/>
    </location>
</feature>
<feature type="disulfide bond" evidence="1">
    <location>
        <begin position="194"/>
        <end position="202"/>
    </location>
</feature>
<sequence>MDRVILLLSVVSLGVSSQPITDGQRLFSIAVSRVQHLHQVAQRLFFEFESSLQTEEQRQLNKIFLQDYCNSDNIISPIDKHETQRSSILKLLSISYRLVESWEIPSRSLSGGSAPRNLISPKLTQLKAGILLLIEANQDGAELFPDSSALQLAPYGNYYQSLGADESLRRTYELLACFKKDMHKVETYLTVAKCRLSPEANCTL</sequence>